<gene>
    <name type="ordered locus">CLK_1946</name>
</gene>
<organism>
    <name type="scientific">Clostridium botulinum (strain Loch Maree / Type A3)</name>
    <dbReference type="NCBI Taxonomy" id="498214"/>
    <lineage>
        <taxon>Bacteria</taxon>
        <taxon>Bacillati</taxon>
        <taxon>Bacillota</taxon>
        <taxon>Clostridia</taxon>
        <taxon>Eubacteriales</taxon>
        <taxon>Clostridiaceae</taxon>
        <taxon>Clostridium</taxon>
    </lineage>
</organism>
<comment type="similarity">
    <text evidence="1">Belongs to the UPF0473 family.</text>
</comment>
<dbReference type="EMBL" id="CP000962">
    <property type="protein sequence ID" value="ACA56964.1"/>
    <property type="molecule type" value="Genomic_DNA"/>
</dbReference>
<dbReference type="RefSeq" id="WP_012344763.1">
    <property type="nucleotide sequence ID" value="NC_010520.1"/>
</dbReference>
<dbReference type="SMR" id="B1KXB4"/>
<dbReference type="KEGG" id="cbl:CLK_1946"/>
<dbReference type="HOGENOM" id="CLU_146610_8_0_9"/>
<dbReference type="HAMAP" id="MF_01448">
    <property type="entry name" value="UPF0473"/>
    <property type="match status" value="1"/>
</dbReference>
<dbReference type="InterPro" id="IPR009711">
    <property type="entry name" value="UPF0473"/>
</dbReference>
<dbReference type="PANTHER" id="PTHR40066">
    <property type="entry name" value="UPF0473 PROTEIN CBO2561/CLC_2432"/>
    <property type="match status" value="1"/>
</dbReference>
<dbReference type="PANTHER" id="PTHR40066:SF1">
    <property type="entry name" value="UPF0473 PROTEIN CBO2561_CLC_2432"/>
    <property type="match status" value="1"/>
</dbReference>
<dbReference type="Pfam" id="PF06949">
    <property type="entry name" value="DUF1292"/>
    <property type="match status" value="1"/>
</dbReference>
<accession>B1KXB4</accession>
<name>Y1946_CLOBM</name>
<evidence type="ECO:0000255" key="1">
    <source>
        <dbReference type="HAMAP-Rule" id="MF_01448"/>
    </source>
</evidence>
<proteinExistence type="inferred from homology"/>
<protein>
    <recommendedName>
        <fullName evidence="1">UPF0473 protein CLK_1946</fullName>
    </recommendedName>
</protein>
<sequence length="85" mass="9783">MDNNVDTITLTDEEGKKTEFEVITKLDIEDKEYVVVVPKDEEVDEAIALRIDNNDNGEEVLVPVEEDEEFNMVAEAYELLFSEEQ</sequence>
<reference key="1">
    <citation type="journal article" date="2007" name="PLoS ONE">
        <title>Analysis of the neurotoxin complex genes in Clostridium botulinum A1-A4 and B1 strains: BoNT/A3, /Ba4 and /B1 clusters are located within plasmids.</title>
        <authorList>
            <person name="Smith T.J."/>
            <person name="Hill K.K."/>
            <person name="Foley B.T."/>
            <person name="Detter J.C."/>
            <person name="Munk A.C."/>
            <person name="Bruce D.C."/>
            <person name="Doggett N.A."/>
            <person name="Smith L.A."/>
            <person name="Marks J.D."/>
            <person name="Xie G."/>
            <person name="Brettin T.S."/>
        </authorList>
    </citation>
    <scope>NUCLEOTIDE SEQUENCE [LARGE SCALE GENOMIC DNA]</scope>
    <source>
        <strain>Loch Maree / Type A3</strain>
    </source>
</reference>
<feature type="chain" id="PRO_1000200973" description="UPF0473 protein CLK_1946">
    <location>
        <begin position="1"/>
        <end position="85"/>
    </location>
</feature>